<sequence length="868" mass="99947">MASLDNLVARYQRCFNDQSLKNSTIELEIRFQQINFLLFKTVYEALVAQEIPSTISHSIRCIKKVHHENHCREKILPSENLYFKKQPLMFFKFSEPASLGCKVSLAIEQPIRKFILDSSVLVRLKNRTTFRVSELWKIELTIVKQLMGSEVSAKLTAFKTLLFDTPEQQTTKNMMSLINPDDEYLYEIEIEYTGKPESLTAADIIKIKNTVLTLISPNHLMLTAYHQAIEFIASHILSSEILLARIKSGKWGLKRLLPQVKSMTKADYMKFYPPVGYYITDKADGIRGIAVIQDTQIYVVADQLYSLGTTGIEPLKPTILDGEFMPEKKEFYGFDVIMYEGNLLTQQGFETRIESLSKGIKVLQAFNIKAEMKPFISLTSADPNVLLKNFESIFKKKTRPYSIDGIILVEPGNSYLNTNTFKWKPTWDNTLDFLVRKCPESLNVPEYAPKKGFSLHLLFVGISGELFKKLALNWCPGYTKLFPVTQRNQNYFPVQFQPSDFPLAFLYYHPDTSSFSDIDGKVLEMRCLKREINHVSWEIVKIREDRQQDLKTGGYFGNDFKTAELTWLNYMDPFSFEELAKGPSGMYFAGAKTGIYRAQTALISFIKQEIIQKISHQSWVIDLGIGKGQDLGRYLDAGVRHLVGIDKDQTALAELVYRKFSHATTRQHKHATNIYVLHQDLAEPAKEISEKVHQIYGFPKEGASSIVSNLFIHYLMKNTQQVENLAVLCHKLLQPGGMVWFTTMLGERVLELLHENRIELNEVWEARENEVVKFAIKRLFKEDILQETGQEIGVLLPFSNGDFYNEYLVNTAFLIKIFKHHGFSLVQKQSFKDWIPEFQNFSKSLYKILTEADKTWTSLFGFICLRKN</sequence>
<organismHost>
    <name type="scientific">Ornithodoros</name>
    <name type="common">relapsing fever ticks</name>
    <dbReference type="NCBI Taxonomy" id="6937"/>
</organismHost>
<organismHost>
    <name type="scientific">Phacochoerus aethiopicus</name>
    <name type="common">Warthog</name>
    <dbReference type="NCBI Taxonomy" id="85517"/>
</organismHost>
<organismHost>
    <name type="scientific">Phacochoerus africanus</name>
    <name type="common">Warthog</name>
    <dbReference type="NCBI Taxonomy" id="41426"/>
</organismHost>
<organismHost>
    <name type="scientific">Potamochoerus larvatus</name>
    <name type="common">Bushpig</name>
    <dbReference type="NCBI Taxonomy" id="273792"/>
</organismHost>
<organismHost>
    <name type="scientific">Sus scrofa</name>
    <name type="common">Pig</name>
    <dbReference type="NCBI Taxonomy" id="9823"/>
</organismHost>
<keyword id="KW-0244">Early protein</keyword>
<keyword id="KW-0342">GTP-binding</keyword>
<keyword id="KW-0378">Hydrolase</keyword>
<keyword id="KW-0489">Methyltransferase</keyword>
<keyword id="KW-0506">mRNA capping</keyword>
<keyword id="KW-0507">mRNA processing</keyword>
<keyword id="KW-0547">Nucleotide-binding</keyword>
<keyword id="KW-0548">Nucleotidyltransferase</keyword>
<keyword id="KW-0694">RNA-binding</keyword>
<keyword id="KW-0949">S-adenosyl-L-methionine</keyword>
<keyword id="KW-0808">Transferase</keyword>
<keyword id="KW-0946">Virion</keyword>
<reference key="1">
    <citation type="submission" date="2003-03" db="EMBL/GenBank/DDBJ databases">
        <title>African swine fever virus genomes.</title>
        <authorList>
            <person name="Kutish G.F."/>
            <person name="Rock D.L."/>
        </authorList>
    </citation>
    <scope>NUCLEOTIDE SEQUENCE [LARGE SCALE GENOMIC DNA]</scope>
</reference>
<proteinExistence type="inferred from homology"/>
<protein>
    <recommendedName>
        <fullName evidence="2">mRNA-capping enzyme</fullName>
    </recommendedName>
    <alternativeName>
        <fullName evidence="2">VTF/CE</fullName>
    </alternativeName>
    <domain>
        <recommendedName>
            <fullName>Polynucleotide 5'-triphosphatase</fullName>
            <ecNumber>3.6.1.74</ecNumber>
        </recommendedName>
        <alternativeName>
            <fullName>mRNA 5'-triphosphatase</fullName>
            <shortName>TPase</shortName>
        </alternativeName>
    </domain>
    <domain>
        <recommendedName>
            <fullName>mRNA guanylyltransferase</fullName>
            <ecNumber>2.7.7.50</ecNumber>
        </recommendedName>
        <alternativeName>
            <fullName>GTP--RNA guanylyltransferase</fullName>
            <shortName>GTase</shortName>
        </alternativeName>
    </domain>
    <domain>
        <recommendedName>
            <fullName>mRNA (guanine-N(7))-methyltransferase</fullName>
            <ecNumber>2.1.1.56</ecNumber>
        </recommendedName>
    </domain>
</protein>
<comment type="function">
    <text evidence="2">Probably catalyzes the second reaction in the mRNA cap formation pathway (By similarity). Forms a covalent complex with GTP (By similarity).</text>
</comment>
<comment type="catalytic activity">
    <reaction evidence="1">
        <text>a 5'-end triphospho-ribonucleoside in mRNA + H2O = a 5'-end diphospho-ribonucleoside in mRNA + phosphate + H(+)</text>
        <dbReference type="Rhea" id="RHEA:67004"/>
        <dbReference type="Rhea" id="RHEA-COMP:17164"/>
        <dbReference type="Rhea" id="RHEA-COMP:17165"/>
        <dbReference type="ChEBI" id="CHEBI:15377"/>
        <dbReference type="ChEBI" id="CHEBI:15378"/>
        <dbReference type="ChEBI" id="CHEBI:43474"/>
        <dbReference type="ChEBI" id="CHEBI:167616"/>
        <dbReference type="ChEBI" id="CHEBI:167618"/>
        <dbReference type="EC" id="3.6.1.74"/>
    </reaction>
    <physiologicalReaction direction="left-to-right" evidence="1">
        <dbReference type="Rhea" id="RHEA:67005"/>
    </physiologicalReaction>
</comment>
<comment type="catalytic activity">
    <reaction evidence="2">
        <text>a 5'-end diphospho-ribonucleoside in mRNA + GTP + H(+) = a 5'-end (5'-triphosphoguanosine)-ribonucleoside in mRNA + diphosphate</text>
        <dbReference type="Rhea" id="RHEA:67012"/>
        <dbReference type="Rhea" id="RHEA-COMP:17165"/>
        <dbReference type="Rhea" id="RHEA-COMP:17166"/>
        <dbReference type="ChEBI" id="CHEBI:15378"/>
        <dbReference type="ChEBI" id="CHEBI:33019"/>
        <dbReference type="ChEBI" id="CHEBI:37565"/>
        <dbReference type="ChEBI" id="CHEBI:167616"/>
        <dbReference type="ChEBI" id="CHEBI:167617"/>
        <dbReference type="EC" id="2.7.7.50"/>
    </reaction>
</comment>
<comment type="catalytic activity">
    <reaction evidence="4">
        <text>a 5'-end (5'-triphosphoguanosine)-ribonucleoside in mRNA + S-adenosyl-L-methionine = a 5'-end (N(7)-methyl 5'-triphosphoguanosine)-ribonucleoside in mRNA + S-adenosyl-L-homocysteine</text>
        <dbReference type="Rhea" id="RHEA:67008"/>
        <dbReference type="Rhea" id="RHEA-COMP:17166"/>
        <dbReference type="Rhea" id="RHEA-COMP:17167"/>
        <dbReference type="ChEBI" id="CHEBI:57856"/>
        <dbReference type="ChEBI" id="CHEBI:59789"/>
        <dbReference type="ChEBI" id="CHEBI:156461"/>
        <dbReference type="ChEBI" id="CHEBI:167617"/>
        <dbReference type="EC" id="2.1.1.56"/>
    </reaction>
</comment>
<comment type="pathway">
    <text>mRNA processing; mRNA capping.</text>
</comment>
<comment type="subunit">
    <text evidence="2">Part of the viral DNA-directed RNA polymerase that consists of 8 polII-like subunits (RPB1, RPB2, RPB3, RPB5, RPB6, RPB7, RPB9, RPB10), a capping enzyme and a termination factor.</text>
</comment>
<comment type="subcellular location">
    <subcellularLocation>
        <location evidence="2">Virion</location>
    </subcellularLocation>
    <text evidence="2">Found in association with viral nucleoid.</text>
</comment>
<comment type="induction">
    <text evidence="5">Expressed in the early phase of the viral replicative cycle.</text>
</comment>
<comment type="domain">
    <text evidence="2">The N-terminus contains the mRNA 5'-triphosphatase domain, the central part contains the mRNA guanylyltransferase, and C-terminus contains the methyltransferase domain.</text>
</comment>
<comment type="similarity">
    <text evidence="5">In the N-terminal section; belongs to the dsDNA virus mRNA guanylyltransferase family.</text>
</comment>
<comment type="similarity">
    <text evidence="4">In the C-terminal section; belongs to the class I-like SAM-binding methyltransferase superfamily. mRNA cap 0 methyltransferase family.</text>
</comment>
<dbReference type="EC" id="3.6.1.74"/>
<dbReference type="EC" id="2.7.7.50"/>
<dbReference type="EC" id="2.1.1.56"/>
<dbReference type="EMBL" id="AY261366">
    <property type="status" value="NOT_ANNOTATED_CDS"/>
    <property type="molecule type" value="Genomic_DNA"/>
</dbReference>
<dbReference type="UniPathway" id="UPA00922"/>
<dbReference type="Proteomes" id="UP000000858">
    <property type="component" value="Segment"/>
</dbReference>
<dbReference type="GO" id="GO:0044423">
    <property type="term" value="C:virion component"/>
    <property type="evidence" value="ECO:0007669"/>
    <property type="project" value="UniProtKB-KW"/>
</dbReference>
<dbReference type="GO" id="GO:0005525">
    <property type="term" value="F:GTP binding"/>
    <property type="evidence" value="ECO:0007669"/>
    <property type="project" value="UniProtKB-KW"/>
</dbReference>
<dbReference type="GO" id="GO:0004482">
    <property type="term" value="F:mRNA 5'-cap (guanine-N7-)-methyltransferase activity"/>
    <property type="evidence" value="ECO:0007669"/>
    <property type="project" value="UniProtKB-EC"/>
</dbReference>
<dbReference type="GO" id="GO:0140818">
    <property type="term" value="F:mRNA 5'-triphosphate monophosphatase activity"/>
    <property type="evidence" value="ECO:0007669"/>
    <property type="project" value="RHEA"/>
</dbReference>
<dbReference type="GO" id="GO:0004484">
    <property type="term" value="F:mRNA guanylyltransferase activity"/>
    <property type="evidence" value="ECO:0007669"/>
    <property type="project" value="UniProtKB-EC"/>
</dbReference>
<dbReference type="GO" id="GO:0004651">
    <property type="term" value="F:polynucleotide 5'-phosphatase activity"/>
    <property type="evidence" value="ECO:0007669"/>
    <property type="project" value="UniProtKB-EC"/>
</dbReference>
<dbReference type="GO" id="GO:0003723">
    <property type="term" value="F:RNA binding"/>
    <property type="evidence" value="ECO:0007669"/>
    <property type="project" value="UniProtKB-KW"/>
</dbReference>
<dbReference type="CDD" id="cd02440">
    <property type="entry name" value="AdoMet_MTases"/>
    <property type="match status" value="1"/>
</dbReference>
<dbReference type="Gene3D" id="3.30.470.30">
    <property type="entry name" value="DNA ligase/mRNA capping enzyme"/>
    <property type="match status" value="1"/>
</dbReference>
<dbReference type="Gene3D" id="3.40.50.150">
    <property type="entry name" value="Vaccinia Virus protein VP39"/>
    <property type="match status" value="1"/>
</dbReference>
<dbReference type="InterPro" id="IPR033469">
    <property type="entry name" value="CYTH-like_dom_sf"/>
</dbReference>
<dbReference type="InterPro" id="IPR004971">
    <property type="entry name" value="mRNA_G-N7_MeTrfase_dom"/>
</dbReference>
<dbReference type="InterPro" id="IPR039753">
    <property type="entry name" value="RG7MT1"/>
</dbReference>
<dbReference type="InterPro" id="IPR029063">
    <property type="entry name" value="SAM-dependent_MTases_sf"/>
</dbReference>
<dbReference type="PANTHER" id="PTHR12189:SF2">
    <property type="entry name" value="MRNA CAP GUANINE-N7 METHYLTRANSFERASE"/>
    <property type="match status" value="1"/>
</dbReference>
<dbReference type="PANTHER" id="PTHR12189">
    <property type="entry name" value="MRNA GUANINE-7- METHYLTRANSFERASE"/>
    <property type="match status" value="1"/>
</dbReference>
<dbReference type="Pfam" id="PF03291">
    <property type="entry name" value="mRNA_G-N7_MeTrfase"/>
    <property type="match status" value="1"/>
</dbReference>
<dbReference type="SUPFAM" id="SSF55154">
    <property type="entry name" value="CYTH-like phosphatases"/>
    <property type="match status" value="1"/>
</dbReference>
<dbReference type="SUPFAM" id="SSF56091">
    <property type="entry name" value="DNA ligase/mRNA capping enzyme, catalytic domain"/>
    <property type="match status" value="1"/>
</dbReference>
<dbReference type="SUPFAM" id="SSF53335">
    <property type="entry name" value="S-adenosyl-L-methionine-dependent methyltransferases"/>
    <property type="match status" value="1"/>
</dbReference>
<dbReference type="PROSITE" id="PS51562">
    <property type="entry name" value="RNA_CAP0_MT"/>
    <property type="match status" value="1"/>
</dbReference>
<gene>
    <name type="ordered locus">War-111</name>
</gene>
<feature type="chain" id="PRO_0000373094" description="mRNA-capping enzyme">
    <location>
        <begin position="1"/>
        <end position="868"/>
    </location>
</feature>
<feature type="domain" description="mRNA cap 0 methyltransferase" evidence="4">
    <location>
        <begin position="594"/>
        <end position="868"/>
    </location>
</feature>
<feature type="active site" description="N6-GMP-lysine intermediate" evidence="3">
    <location>
        <position position="282"/>
    </location>
</feature>
<feature type="binding site" evidence="4">
    <location>
        <position position="607"/>
    </location>
    <ligand>
        <name>S-adenosyl-L-methionine</name>
        <dbReference type="ChEBI" id="CHEBI:59789"/>
    </ligand>
</feature>
<feature type="binding site" evidence="4">
    <location>
        <position position="624"/>
    </location>
    <ligand>
        <name>S-adenosyl-L-methionine</name>
        <dbReference type="ChEBI" id="CHEBI:59789"/>
    </ligand>
</feature>
<feature type="binding site" evidence="4">
    <location>
        <position position="646"/>
    </location>
    <ligand>
        <name>S-adenosyl-L-methionine</name>
        <dbReference type="ChEBI" id="CHEBI:59789"/>
    </ligand>
</feature>
<feature type="binding site" evidence="4">
    <location>
        <begin position="710"/>
        <end position="712"/>
    </location>
    <ligand>
        <name>S-adenosyl-L-methionine</name>
        <dbReference type="ChEBI" id="CHEBI:59789"/>
    </ligand>
</feature>
<feature type="site" description="mRNA cap binding" evidence="4">
    <location>
        <position position="627"/>
    </location>
</feature>
<feature type="site" description="mRNA cap binding" evidence="4">
    <location>
        <position position="658"/>
    </location>
</feature>
<feature type="site" description="mRNA cap binding" evidence="4">
    <location>
        <position position="713"/>
    </location>
</feature>
<feature type="site" description="mRNA cap binding" evidence="4">
    <location>
        <position position="806"/>
    </location>
</feature>
<organism>
    <name type="scientific">African swine fever virus (isolate Warthog/Namibia/Wart80/1980)</name>
    <name type="common">ASFV</name>
    <dbReference type="NCBI Taxonomy" id="561444"/>
    <lineage>
        <taxon>Viruses</taxon>
        <taxon>Varidnaviria</taxon>
        <taxon>Bamfordvirae</taxon>
        <taxon>Nucleocytoviricota</taxon>
        <taxon>Pokkesviricetes</taxon>
        <taxon>Asfuvirales</taxon>
        <taxon>Asfarviridae</taxon>
        <taxon>Asfivirus</taxon>
        <taxon>African swine fever virus</taxon>
    </lineage>
</organism>
<accession>P0C994</accession>
<name>MCE_ASFWA</name>
<evidence type="ECO:0000250" key="1">
    <source>
        <dbReference type="UniProtKB" id="P04298"/>
    </source>
</evidence>
<evidence type="ECO:0000250" key="2">
    <source>
        <dbReference type="UniProtKB" id="P32094"/>
    </source>
</evidence>
<evidence type="ECO:0000255" key="3"/>
<evidence type="ECO:0000255" key="4">
    <source>
        <dbReference type="PROSITE-ProRule" id="PRU00895"/>
    </source>
</evidence>
<evidence type="ECO:0000305" key="5"/>